<feature type="chain" id="PRO_0000175817" description="Probable transcriptional regulatory protein HD_0596">
    <location>
        <begin position="1"/>
        <end position="246"/>
    </location>
</feature>
<accession>Q7VNF3</accession>
<gene>
    <name type="ordered locus">HD_0596</name>
</gene>
<keyword id="KW-0963">Cytoplasm</keyword>
<keyword id="KW-0238">DNA-binding</keyword>
<keyword id="KW-1185">Reference proteome</keyword>
<keyword id="KW-0804">Transcription</keyword>
<keyword id="KW-0805">Transcription regulation</keyword>
<sequence>MAGHSKWANIKHRKAAQDAQRGKIFTKLIRELVTAAKIGGGDVAANPRLRSAVDKALSSNMTRDTINRAIERGVGGGDDTNMETKIYEGYGPGGTAVMVECLSDNANRTISQVRPSFTKCGGNLGTEGSVGYLFSKKGLILIANADEDALTEAAIEAGADDIQAQEDGSFEIYTAWEDLGSVRDGIEAAGFNIQEAEVTMIPSTTVDLDAETAPKLLKLIDMLEDCDDVQNVYHNGEISDEVAALL</sequence>
<proteinExistence type="inferred from homology"/>
<protein>
    <recommendedName>
        <fullName evidence="1">Probable transcriptional regulatory protein HD_0596</fullName>
    </recommendedName>
</protein>
<name>Y596_HAEDU</name>
<reference key="1">
    <citation type="submission" date="2003-06" db="EMBL/GenBank/DDBJ databases">
        <title>The complete genome sequence of Haemophilus ducreyi.</title>
        <authorList>
            <person name="Munson R.S. Jr."/>
            <person name="Ray W.C."/>
            <person name="Mahairas G."/>
            <person name="Sabo P."/>
            <person name="Mungur R."/>
            <person name="Johnson L."/>
            <person name="Nguyen D."/>
            <person name="Wang J."/>
            <person name="Forst C."/>
            <person name="Hood L."/>
        </authorList>
    </citation>
    <scope>NUCLEOTIDE SEQUENCE [LARGE SCALE GENOMIC DNA]</scope>
    <source>
        <strain>35000HP / ATCC 700724</strain>
    </source>
</reference>
<organism>
    <name type="scientific">Haemophilus ducreyi (strain 35000HP / ATCC 700724)</name>
    <dbReference type="NCBI Taxonomy" id="233412"/>
    <lineage>
        <taxon>Bacteria</taxon>
        <taxon>Pseudomonadati</taxon>
        <taxon>Pseudomonadota</taxon>
        <taxon>Gammaproteobacteria</taxon>
        <taxon>Pasteurellales</taxon>
        <taxon>Pasteurellaceae</taxon>
        <taxon>Haemophilus</taxon>
    </lineage>
</organism>
<evidence type="ECO:0000255" key="1">
    <source>
        <dbReference type="HAMAP-Rule" id="MF_00693"/>
    </source>
</evidence>
<dbReference type="EMBL" id="AE017143">
    <property type="protein sequence ID" value="AAP95526.1"/>
    <property type="molecule type" value="Genomic_DNA"/>
</dbReference>
<dbReference type="RefSeq" id="WP_010944579.1">
    <property type="nucleotide sequence ID" value="NC_002940.2"/>
</dbReference>
<dbReference type="SMR" id="Q7VNF3"/>
<dbReference type="STRING" id="233412.HD_0596"/>
<dbReference type="KEGG" id="hdu:HD_0596"/>
<dbReference type="eggNOG" id="COG0217">
    <property type="taxonomic scope" value="Bacteria"/>
</dbReference>
<dbReference type="HOGENOM" id="CLU_062974_2_2_6"/>
<dbReference type="OrthoDB" id="9781053at2"/>
<dbReference type="Proteomes" id="UP000001022">
    <property type="component" value="Chromosome"/>
</dbReference>
<dbReference type="GO" id="GO:0005829">
    <property type="term" value="C:cytosol"/>
    <property type="evidence" value="ECO:0007669"/>
    <property type="project" value="TreeGrafter"/>
</dbReference>
<dbReference type="GO" id="GO:0003677">
    <property type="term" value="F:DNA binding"/>
    <property type="evidence" value="ECO:0007669"/>
    <property type="project" value="UniProtKB-UniRule"/>
</dbReference>
<dbReference type="GO" id="GO:0006355">
    <property type="term" value="P:regulation of DNA-templated transcription"/>
    <property type="evidence" value="ECO:0007669"/>
    <property type="project" value="UniProtKB-UniRule"/>
</dbReference>
<dbReference type="FunFam" id="1.10.10.200:FF:000001">
    <property type="entry name" value="Probable transcriptional regulatory protein YebC"/>
    <property type="match status" value="1"/>
</dbReference>
<dbReference type="FunFam" id="3.30.70.980:FF:000002">
    <property type="entry name" value="Probable transcriptional regulatory protein YebC"/>
    <property type="match status" value="1"/>
</dbReference>
<dbReference type="Gene3D" id="1.10.10.200">
    <property type="match status" value="1"/>
</dbReference>
<dbReference type="Gene3D" id="3.30.70.980">
    <property type="match status" value="2"/>
</dbReference>
<dbReference type="HAMAP" id="MF_00693">
    <property type="entry name" value="Transcrip_reg_TACO1"/>
    <property type="match status" value="1"/>
</dbReference>
<dbReference type="InterPro" id="IPR017856">
    <property type="entry name" value="Integrase-like_N"/>
</dbReference>
<dbReference type="InterPro" id="IPR048300">
    <property type="entry name" value="TACO1_YebC-like_2nd/3rd_dom"/>
</dbReference>
<dbReference type="InterPro" id="IPR049083">
    <property type="entry name" value="TACO1_YebC_N"/>
</dbReference>
<dbReference type="InterPro" id="IPR002876">
    <property type="entry name" value="Transcrip_reg_TACO1-like"/>
</dbReference>
<dbReference type="InterPro" id="IPR026564">
    <property type="entry name" value="Transcrip_reg_TACO1-like_dom3"/>
</dbReference>
<dbReference type="InterPro" id="IPR029072">
    <property type="entry name" value="YebC-like"/>
</dbReference>
<dbReference type="NCBIfam" id="NF001030">
    <property type="entry name" value="PRK00110.1"/>
    <property type="match status" value="1"/>
</dbReference>
<dbReference type="NCBIfam" id="NF009044">
    <property type="entry name" value="PRK12378.1"/>
    <property type="match status" value="1"/>
</dbReference>
<dbReference type="NCBIfam" id="TIGR01033">
    <property type="entry name" value="YebC/PmpR family DNA-binding transcriptional regulator"/>
    <property type="match status" value="1"/>
</dbReference>
<dbReference type="PANTHER" id="PTHR12532:SF6">
    <property type="entry name" value="TRANSCRIPTIONAL REGULATORY PROTEIN YEBC-RELATED"/>
    <property type="match status" value="1"/>
</dbReference>
<dbReference type="PANTHER" id="PTHR12532">
    <property type="entry name" value="TRANSLATIONAL ACTIVATOR OF CYTOCHROME C OXIDASE 1"/>
    <property type="match status" value="1"/>
</dbReference>
<dbReference type="Pfam" id="PF20772">
    <property type="entry name" value="TACO1_YebC_N"/>
    <property type="match status" value="1"/>
</dbReference>
<dbReference type="Pfam" id="PF01709">
    <property type="entry name" value="Transcrip_reg"/>
    <property type="match status" value="1"/>
</dbReference>
<dbReference type="SUPFAM" id="SSF75625">
    <property type="entry name" value="YebC-like"/>
    <property type="match status" value="1"/>
</dbReference>
<comment type="subcellular location">
    <subcellularLocation>
        <location evidence="1">Cytoplasm</location>
    </subcellularLocation>
</comment>
<comment type="similarity">
    <text evidence="1">Belongs to the TACO1 family.</text>
</comment>